<gene>
    <name evidence="1" type="primary">nadK</name>
    <name type="ordered locus">BP2505</name>
</gene>
<accession>Q7VVX6</accession>
<reference key="1">
    <citation type="journal article" date="2003" name="Nat. Genet.">
        <title>Comparative analysis of the genome sequences of Bordetella pertussis, Bordetella parapertussis and Bordetella bronchiseptica.</title>
        <authorList>
            <person name="Parkhill J."/>
            <person name="Sebaihia M."/>
            <person name="Preston A."/>
            <person name="Murphy L.D."/>
            <person name="Thomson N.R."/>
            <person name="Harris D.E."/>
            <person name="Holden M.T.G."/>
            <person name="Churcher C.M."/>
            <person name="Bentley S.D."/>
            <person name="Mungall K.L."/>
            <person name="Cerdeno-Tarraga A.-M."/>
            <person name="Temple L."/>
            <person name="James K.D."/>
            <person name="Harris B."/>
            <person name="Quail M.A."/>
            <person name="Achtman M."/>
            <person name="Atkin R."/>
            <person name="Baker S."/>
            <person name="Basham D."/>
            <person name="Bason N."/>
            <person name="Cherevach I."/>
            <person name="Chillingworth T."/>
            <person name="Collins M."/>
            <person name="Cronin A."/>
            <person name="Davis P."/>
            <person name="Doggett J."/>
            <person name="Feltwell T."/>
            <person name="Goble A."/>
            <person name="Hamlin N."/>
            <person name="Hauser H."/>
            <person name="Holroyd S."/>
            <person name="Jagels K."/>
            <person name="Leather S."/>
            <person name="Moule S."/>
            <person name="Norberczak H."/>
            <person name="O'Neil S."/>
            <person name="Ormond D."/>
            <person name="Price C."/>
            <person name="Rabbinowitsch E."/>
            <person name="Rutter S."/>
            <person name="Sanders M."/>
            <person name="Saunders D."/>
            <person name="Seeger K."/>
            <person name="Sharp S."/>
            <person name="Simmonds M."/>
            <person name="Skelton J."/>
            <person name="Squares R."/>
            <person name="Squares S."/>
            <person name="Stevens K."/>
            <person name="Unwin L."/>
            <person name="Whitehead S."/>
            <person name="Barrell B.G."/>
            <person name="Maskell D.J."/>
        </authorList>
    </citation>
    <scope>NUCLEOTIDE SEQUENCE [LARGE SCALE GENOMIC DNA]</scope>
    <source>
        <strain>Tohama I / ATCC BAA-589 / NCTC 13251</strain>
    </source>
</reference>
<keyword id="KW-0067">ATP-binding</keyword>
<keyword id="KW-0963">Cytoplasm</keyword>
<keyword id="KW-0418">Kinase</keyword>
<keyword id="KW-0520">NAD</keyword>
<keyword id="KW-0521">NADP</keyword>
<keyword id="KW-0547">Nucleotide-binding</keyword>
<keyword id="KW-1185">Reference proteome</keyword>
<keyword id="KW-0808">Transferase</keyword>
<name>NADK_BORPE</name>
<proteinExistence type="inferred from homology"/>
<comment type="function">
    <text evidence="1">Involved in the regulation of the intracellular balance of NAD and NADP, and is a key enzyme in the biosynthesis of NADP. Catalyzes specifically the phosphorylation on 2'-hydroxyl of the adenosine moiety of NAD to yield NADP.</text>
</comment>
<comment type="catalytic activity">
    <reaction evidence="1">
        <text>NAD(+) + ATP = ADP + NADP(+) + H(+)</text>
        <dbReference type="Rhea" id="RHEA:18629"/>
        <dbReference type="ChEBI" id="CHEBI:15378"/>
        <dbReference type="ChEBI" id="CHEBI:30616"/>
        <dbReference type="ChEBI" id="CHEBI:57540"/>
        <dbReference type="ChEBI" id="CHEBI:58349"/>
        <dbReference type="ChEBI" id="CHEBI:456216"/>
        <dbReference type="EC" id="2.7.1.23"/>
    </reaction>
</comment>
<comment type="cofactor">
    <cofactor evidence="1">
        <name>a divalent metal cation</name>
        <dbReference type="ChEBI" id="CHEBI:60240"/>
    </cofactor>
</comment>
<comment type="subcellular location">
    <subcellularLocation>
        <location evidence="1">Cytoplasm</location>
    </subcellularLocation>
</comment>
<comment type="similarity">
    <text evidence="1">Belongs to the NAD kinase family.</text>
</comment>
<evidence type="ECO:0000255" key="1">
    <source>
        <dbReference type="HAMAP-Rule" id="MF_00361"/>
    </source>
</evidence>
<protein>
    <recommendedName>
        <fullName evidence="1">NAD kinase</fullName>
        <ecNumber evidence="1">2.7.1.23</ecNumber>
    </recommendedName>
    <alternativeName>
        <fullName evidence="1">ATP-dependent NAD kinase</fullName>
    </alternativeName>
</protein>
<dbReference type="EC" id="2.7.1.23" evidence="1"/>
<dbReference type="EMBL" id="BX640418">
    <property type="protein sequence ID" value="CAE42777.1"/>
    <property type="molecule type" value="Genomic_DNA"/>
</dbReference>
<dbReference type="RefSeq" id="NP_881132.1">
    <property type="nucleotide sequence ID" value="NC_002929.2"/>
</dbReference>
<dbReference type="RefSeq" id="WP_010930961.1">
    <property type="nucleotide sequence ID" value="NZ_CP039022.1"/>
</dbReference>
<dbReference type="SMR" id="Q7VVX6"/>
<dbReference type="STRING" id="257313.BP2505"/>
<dbReference type="PaxDb" id="257313-BP2505"/>
<dbReference type="KEGG" id="bpe:BP2505"/>
<dbReference type="PATRIC" id="fig|257313.5.peg.2703"/>
<dbReference type="eggNOG" id="COG0061">
    <property type="taxonomic scope" value="Bacteria"/>
</dbReference>
<dbReference type="HOGENOM" id="CLU_008831_0_1_4"/>
<dbReference type="Proteomes" id="UP000002676">
    <property type="component" value="Chromosome"/>
</dbReference>
<dbReference type="GO" id="GO:0005737">
    <property type="term" value="C:cytoplasm"/>
    <property type="evidence" value="ECO:0007669"/>
    <property type="project" value="UniProtKB-SubCell"/>
</dbReference>
<dbReference type="GO" id="GO:0005524">
    <property type="term" value="F:ATP binding"/>
    <property type="evidence" value="ECO:0007669"/>
    <property type="project" value="UniProtKB-KW"/>
</dbReference>
<dbReference type="GO" id="GO:0046872">
    <property type="term" value="F:metal ion binding"/>
    <property type="evidence" value="ECO:0007669"/>
    <property type="project" value="UniProtKB-UniRule"/>
</dbReference>
<dbReference type="GO" id="GO:0051287">
    <property type="term" value="F:NAD binding"/>
    <property type="evidence" value="ECO:0007669"/>
    <property type="project" value="UniProtKB-ARBA"/>
</dbReference>
<dbReference type="GO" id="GO:0003951">
    <property type="term" value="F:NAD+ kinase activity"/>
    <property type="evidence" value="ECO:0007669"/>
    <property type="project" value="UniProtKB-UniRule"/>
</dbReference>
<dbReference type="GO" id="GO:0019674">
    <property type="term" value="P:NAD metabolic process"/>
    <property type="evidence" value="ECO:0007669"/>
    <property type="project" value="InterPro"/>
</dbReference>
<dbReference type="GO" id="GO:0006741">
    <property type="term" value="P:NADP biosynthetic process"/>
    <property type="evidence" value="ECO:0007669"/>
    <property type="project" value="UniProtKB-UniRule"/>
</dbReference>
<dbReference type="Gene3D" id="3.40.50.10330">
    <property type="entry name" value="Probable inorganic polyphosphate/atp-NAD kinase, domain 1"/>
    <property type="match status" value="1"/>
</dbReference>
<dbReference type="Gene3D" id="2.60.200.30">
    <property type="entry name" value="Probable inorganic polyphosphate/atp-NAD kinase, domain 2"/>
    <property type="match status" value="1"/>
</dbReference>
<dbReference type="HAMAP" id="MF_00361">
    <property type="entry name" value="NAD_kinase"/>
    <property type="match status" value="1"/>
</dbReference>
<dbReference type="InterPro" id="IPR017438">
    <property type="entry name" value="ATP-NAD_kinase_N"/>
</dbReference>
<dbReference type="InterPro" id="IPR017437">
    <property type="entry name" value="ATP-NAD_kinase_PpnK-typ_C"/>
</dbReference>
<dbReference type="InterPro" id="IPR016064">
    <property type="entry name" value="NAD/diacylglycerol_kinase_sf"/>
</dbReference>
<dbReference type="InterPro" id="IPR002504">
    <property type="entry name" value="NADK"/>
</dbReference>
<dbReference type="NCBIfam" id="NF002561">
    <property type="entry name" value="PRK02155.1"/>
    <property type="match status" value="1"/>
</dbReference>
<dbReference type="PANTHER" id="PTHR20275">
    <property type="entry name" value="NAD KINASE"/>
    <property type="match status" value="1"/>
</dbReference>
<dbReference type="PANTHER" id="PTHR20275:SF0">
    <property type="entry name" value="NAD KINASE"/>
    <property type="match status" value="1"/>
</dbReference>
<dbReference type="Pfam" id="PF01513">
    <property type="entry name" value="NAD_kinase"/>
    <property type="match status" value="1"/>
</dbReference>
<dbReference type="Pfam" id="PF20143">
    <property type="entry name" value="NAD_kinase_C"/>
    <property type="match status" value="1"/>
</dbReference>
<dbReference type="SUPFAM" id="SSF111331">
    <property type="entry name" value="NAD kinase/diacylglycerol kinase-like"/>
    <property type="match status" value="1"/>
</dbReference>
<organism>
    <name type="scientific">Bordetella pertussis (strain Tohama I / ATCC BAA-589 / NCTC 13251)</name>
    <dbReference type="NCBI Taxonomy" id="257313"/>
    <lineage>
        <taxon>Bacteria</taxon>
        <taxon>Pseudomonadati</taxon>
        <taxon>Pseudomonadota</taxon>
        <taxon>Betaproteobacteria</taxon>
        <taxon>Burkholderiales</taxon>
        <taxon>Alcaligenaceae</taxon>
        <taxon>Bordetella</taxon>
    </lineage>
</organism>
<feature type="chain" id="PRO_0000229615" description="NAD kinase">
    <location>
        <begin position="1"/>
        <end position="299"/>
    </location>
</feature>
<feature type="active site" description="Proton acceptor" evidence="1">
    <location>
        <position position="71"/>
    </location>
</feature>
<feature type="binding site" evidence="1">
    <location>
        <begin position="71"/>
        <end position="72"/>
    </location>
    <ligand>
        <name>NAD(+)</name>
        <dbReference type="ChEBI" id="CHEBI:57540"/>
    </ligand>
</feature>
<feature type="binding site" evidence="1">
    <location>
        <begin position="145"/>
        <end position="146"/>
    </location>
    <ligand>
        <name>NAD(+)</name>
        <dbReference type="ChEBI" id="CHEBI:57540"/>
    </ligand>
</feature>
<feature type="binding site" evidence="1">
    <location>
        <position position="173"/>
    </location>
    <ligand>
        <name>NAD(+)</name>
        <dbReference type="ChEBI" id="CHEBI:57540"/>
    </ligand>
</feature>
<feature type="binding site" evidence="1">
    <location>
        <position position="175"/>
    </location>
    <ligand>
        <name>NAD(+)</name>
        <dbReference type="ChEBI" id="CHEBI:57540"/>
    </ligand>
</feature>
<feature type="binding site" evidence="1">
    <location>
        <begin position="186"/>
        <end position="191"/>
    </location>
    <ligand>
        <name>NAD(+)</name>
        <dbReference type="ChEBI" id="CHEBI:57540"/>
    </ligand>
</feature>
<feature type="binding site" evidence="1">
    <location>
        <position position="210"/>
    </location>
    <ligand>
        <name>NAD(+)</name>
        <dbReference type="ChEBI" id="CHEBI:57540"/>
    </ligand>
</feature>
<feature type="binding site" evidence="1">
    <location>
        <position position="248"/>
    </location>
    <ligand>
        <name>NAD(+)</name>
        <dbReference type="ChEBI" id="CHEBI:57540"/>
    </ligand>
</feature>
<sequence>MYFPIVALIGRYQDTGLDAPLTALAQMLTQAGRRVLVEAETARNAGVSGYPVADWDEIGRTATLAVVMGGDGTVLGAARHLAPYGVPLIGINHGRLGFITDIPLQDAHDALGRVLEGNYQAEDRMLLQGGVWRGEQQMYSASAVNDVVLNRAGRGGMIEVRVELDGAFMYTQRADGLIIATPTGSTAYSLSANGPILHPGMNAMVLVPVAPQTLSNRPIVIPDSGVLNMTLTAMGRVEIGASVHFDMQTWSDLQPGDRITVQRAPHIIRFVHPEGYSFFSTLRRKLHWNLMPQATDNLE</sequence>